<accession>Q6BU30</accession>
<protein>
    <recommendedName>
        <fullName>Ubiquitin-like protein ATG12</fullName>
    </recommendedName>
    <alternativeName>
        <fullName>Autophagy-related protein 12</fullName>
    </alternativeName>
</protein>
<keyword id="KW-0072">Autophagy</keyword>
<keyword id="KW-1017">Isopeptide bond</keyword>
<keyword id="KW-0472">Membrane</keyword>
<keyword id="KW-0653">Protein transport</keyword>
<keyword id="KW-1185">Reference proteome</keyword>
<keyword id="KW-0813">Transport</keyword>
<keyword id="KW-0833">Ubl conjugation pathway</keyword>
<feature type="chain" id="PRO_0000212478" description="Ubiquitin-like protein ATG12">
    <location>
        <begin position="1"/>
        <end position="153"/>
    </location>
</feature>
<feature type="region of interest" description="Disordered" evidence="2">
    <location>
        <begin position="1"/>
        <end position="26"/>
    </location>
</feature>
<feature type="cross-link" description="Glycyl lysine isopeptide (Gly-Lys) (interchain with K-147 in ATG5)" evidence="1">
    <location>
        <position position="153"/>
    </location>
</feature>
<name>ATG12_DEBHA</name>
<dbReference type="EMBL" id="CR382135">
    <property type="protein sequence ID" value="CAG86367.1"/>
    <property type="molecule type" value="Genomic_DNA"/>
</dbReference>
<dbReference type="RefSeq" id="XP_458289.1">
    <property type="nucleotide sequence ID" value="XM_458289.1"/>
</dbReference>
<dbReference type="SMR" id="Q6BU30"/>
<dbReference type="FunCoup" id="Q6BU30">
    <property type="interactions" value="173"/>
</dbReference>
<dbReference type="STRING" id="284592.Q6BU30"/>
<dbReference type="GeneID" id="2900644"/>
<dbReference type="KEGG" id="dha:DEHA2C14036g"/>
<dbReference type="VEuPathDB" id="FungiDB:DEHA2C14036g"/>
<dbReference type="eggNOG" id="KOG3439">
    <property type="taxonomic scope" value="Eukaryota"/>
</dbReference>
<dbReference type="HOGENOM" id="CLU_106795_0_1_1"/>
<dbReference type="InParanoid" id="Q6BU30"/>
<dbReference type="OMA" id="DLPMNMS"/>
<dbReference type="OrthoDB" id="10003551at2759"/>
<dbReference type="Proteomes" id="UP000000599">
    <property type="component" value="Chromosome C"/>
</dbReference>
<dbReference type="GO" id="GO:0034274">
    <property type="term" value="C:Atg12-Atg5-Atg16 complex"/>
    <property type="evidence" value="ECO:0007669"/>
    <property type="project" value="EnsemblFungi"/>
</dbReference>
<dbReference type="GO" id="GO:0000421">
    <property type="term" value="C:autophagosome membrane"/>
    <property type="evidence" value="ECO:0007669"/>
    <property type="project" value="TreeGrafter"/>
</dbReference>
<dbReference type="GO" id="GO:0005829">
    <property type="term" value="C:cytosol"/>
    <property type="evidence" value="ECO:0007669"/>
    <property type="project" value="EnsemblFungi"/>
</dbReference>
<dbReference type="GO" id="GO:0034045">
    <property type="term" value="C:phagophore assembly site membrane"/>
    <property type="evidence" value="ECO:0007669"/>
    <property type="project" value="UniProtKB-SubCell"/>
</dbReference>
<dbReference type="GO" id="GO:0019776">
    <property type="term" value="F:Atg8-family ligase activity"/>
    <property type="evidence" value="ECO:0007669"/>
    <property type="project" value="EnsemblFungi"/>
</dbReference>
<dbReference type="GO" id="GO:0008047">
    <property type="term" value="F:enzyme activator activity"/>
    <property type="evidence" value="ECO:0007669"/>
    <property type="project" value="EnsemblFungi"/>
</dbReference>
<dbReference type="GO" id="GO:0031386">
    <property type="term" value="F:protein tag activity"/>
    <property type="evidence" value="ECO:0007669"/>
    <property type="project" value="EnsemblFungi"/>
</dbReference>
<dbReference type="GO" id="GO:0000045">
    <property type="term" value="P:autophagosome assembly"/>
    <property type="evidence" value="ECO:0007669"/>
    <property type="project" value="EnsemblFungi"/>
</dbReference>
<dbReference type="GO" id="GO:0097352">
    <property type="term" value="P:autophagosome maturation"/>
    <property type="evidence" value="ECO:0007669"/>
    <property type="project" value="TreeGrafter"/>
</dbReference>
<dbReference type="GO" id="GO:0000422">
    <property type="term" value="P:autophagy of mitochondrion"/>
    <property type="evidence" value="ECO:0007669"/>
    <property type="project" value="EnsemblFungi"/>
</dbReference>
<dbReference type="GO" id="GO:0032258">
    <property type="term" value="P:cytoplasm to vacuole targeting by the Cvt pathway"/>
    <property type="evidence" value="ECO:0007669"/>
    <property type="project" value="EnsemblFungi"/>
</dbReference>
<dbReference type="GO" id="GO:0061723">
    <property type="term" value="P:glycophagy"/>
    <property type="evidence" value="ECO:0007669"/>
    <property type="project" value="TreeGrafter"/>
</dbReference>
<dbReference type="GO" id="GO:0034727">
    <property type="term" value="P:piecemeal microautophagy of the nucleus"/>
    <property type="evidence" value="ECO:0007669"/>
    <property type="project" value="EnsemblFungi"/>
</dbReference>
<dbReference type="CDD" id="cd01612">
    <property type="entry name" value="Ubl_ATG12"/>
    <property type="match status" value="1"/>
</dbReference>
<dbReference type="Gene3D" id="3.10.20.90">
    <property type="entry name" value="Phosphatidylinositol 3-kinase Catalytic Subunit, Chain A, domain 1"/>
    <property type="match status" value="1"/>
</dbReference>
<dbReference type="InterPro" id="IPR007242">
    <property type="entry name" value="Atg12"/>
</dbReference>
<dbReference type="InterPro" id="IPR029071">
    <property type="entry name" value="Ubiquitin-like_domsf"/>
</dbReference>
<dbReference type="PANTHER" id="PTHR13385">
    <property type="entry name" value="AUTOPHAGY PROTEIN 12"/>
    <property type="match status" value="1"/>
</dbReference>
<dbReference type="PANTHER" id="PTHR13385:SF0">
    <property type="entry name" value="UBIQUITIN-LIKE PROTEIN ATG12"/>
    <property type="match status" value="1"/>
</dbReference>
<dbReference type="Pfam" id="PF04110">
    <property type="entry name" value="APG12"/>
    <property type="match status" value="1"/>
</dbReference>
<dbReference type="SUPFAM" id="SSF54236">
    <property type="entry name" value="Ubiquitin-like"/>
    <property type="match status" value="1"/>
</dbReference>
<comment type="function">
    <text evidence="1">Ubiquitin-like protein involved in cytoplasm to vacuole transport (Cvt), autophagy vesicles formation, mitophagy, and nucleophagy. Conjugation with ATG5 through a ubiquitin-like conjugating system involving also ATG7 as an E1-like activating enzyme and ATG10 as an E2-like conjugating enzyme, is essential for its function. The ATG12-ATG5 conjugate functions as an E3-like enzyme which is required for lipidation of ATG8 and ATG8 association to the vesicle membranes (By similarity).</text>
</comment>
<comment type="subunit">
    <text evidence="1">Forms a conjugate with ATG5.</text>
</comment>
<comment type="subcellular location">
    <subcellularLocation>
        <location evidence="1">Preautophagosomal structure membrane</location>
        <topology evidence="1">Peripheral membrane protein</topology>
    </subcellularLocation>
</comment>
<comment type="similarity">
    <text evidence="3">Belongs to the ATG12 family.</text>
</comment>
<organism>
    <name type="scientific">Debaryomyces hansenii (strain ATCC 36239 / CBS 767 / BCRC 21394 / JCM 1990 / NBRC 0083 / IGC 2968)</name>
    <name type="common">Yeast</name>
    <name type="synonym">Torulaspora hansenii</name>
    <dbReference type="NCBI Taxonomy" id="284592"/>
    <lineage>
        <taxon>Eukaryota</taxon>
        <taxon>Fungi</taxon>
        <taxon>Dikarya</taxon>
        <taxon>Ascomycota</taxon>
        <taxon>Saccharomycotina</taxon>
        <taxon>Pichiomycetes</taxon>
        <taxon>Debaryomycetaceae</taxon>
        <taxon>Debaryomyces</taxon>
    </lineage>
</organism>
<proteinExistence type="inferred from homology"/>
<evidence type="ECO:0000250" key="1"/>
<evidence type="ECO:0000256" key="2">
    <source>
        <dbReference type="SAM" id="MobiDB-lite"/>
    </source>
</evidence>
<evidence type="ECO:0000305" key="3"/>
<reference key="1">
    <citation type="journal article" date="2004" name="Nature">
        <title>Genome evolution in yeasts.</title>
        <authorList>
            <person name="Dujon B."/>
            <person name="Sherman D."/>
            <person name="Fischer G."/>
            <person name="Durrens P."/>
            <person name="Casaregola S."/>
            <person name="Lafontaine I."/>
            <person name="de Montigny J."/>
            <person name="Marck C."/>
            <person name="Neuveglise C."/>
            <person name="Talla E."/>
            <person name="Goffard N."/>
            <person name="Frangeul L."/>
            <person name="Aigle M."/>
            <person name="Anthouard V."/>
            <person name="Babour A."/>
            <person name="Barbe V."/>
            <person name="Barnay S."/>
            <person name="Blanchin S."/>
            <person name="Beckerich J.-M."/>
            <person name="Beyne E."/>
            <person name="Bleykasten C."/>
            <person name="Boisrame A."/>
            <person name="Boyer J."/>
            <person name="Cattolico L."/>
            <person name="Confanioleri F."/>
            <person name="de Daruvar A."/>
            <person name="Despons L."/>
            <person name="Fabre E."/>
            <person name="Fairhead C."/>
            <person name="Ferry-Dumazet H."/>
            <person name="Groppi A."/>
            <person name="Hantraye F."/>
            <person name="Hennequin C."/>
            <person name="Jauniaux N."/>
            <person name="Joyet P."/>
            <person name="Kachouri R."/>
            <person name="Kerrest A."/>
            <person name="Koszul R."/>
            <person name="Lemaire M."/>
            <person name="Lesur I."/>
            <person name="Ma L."/>
            <person name="Muller H."/>
            <person name="Nicaud J.-M."/>
            <person name="Nikolski M."/>
            <person name="Oztas S."/>
            <person name="Ozier-Kalogeropoulos O."/>
            <person name="Pellenz S."/>
            <person name="Potier S."/>
            <person name="Richard G.-F."/>
            <person name="Straub M.-L."/>
            <person name="Suleau A."/>
            <person name="Swennen D."/>
            <person name="Tekaia F."/>
            <person name="Wesolowski-Louvel M."/>
            <person name="Westhof E."/>
            <person name="Wirth B."/>
            <person name="Zeniou-Meyer M."/>
            <person name="Zivanovic Y."/>
            <person name="Bolotin-Fukuhara M."/>
            <person name="Thierry A."/>
            <person name="Bouchier C."/>
            <person name="Caudron B."/>
            <person name="Scarpelli C."/>
            <person name="Gaillardin C."/>
            <person name="Weissenbach J."/>
            <person name="Wincker P."/>
            <person name="Souciet J.-L."/>
        </authorList>
    </citation>
    <scope>NUCLEOTIDE SEQUENCE [LARGE SCALE GENOMIC DNA]</scope>
    <source>
        <strain>ATCC 36239 / CBS 767 / BCRC 21394 / JCM 1990 / NBRC 0083 / IGC 2968</strain>
    </source>
</reference>
<gene>
    <name type="primary">ATG12</name>
    <name type="ordered locus">DEHA2C14036g</name>
</gene>
<sequence length="153" mass="17400">MSMIQSDQDESSDTSDASEVSDTLEDKVIEDEKIETRIPLSTSIVLEKLPDQKQVQLSRITNESGIFKVTIRFQPIGSTPSINPRVFKISSNQSISTISKFLIKRLKIKSNLIYLYIQNSFQPNPDEKLGDLYHLFKTNNELIINYCHSIAFG</sequence>